<dbReference type="EC" id="6.1.1.23" evidence="1"/>
<dbReference type="EMBL" id="AM260522">
    <property type="protein sequence ID" value="CAJ99617.1"/>
    <property type="molecule type" value="Genomic_DNA"/>
</dbReference>
<dbReference type="RefSeq" id="WP_011577730.1">
    <property type="nucleotide sequence ID" value="NC_008229.1"/>
</dbReference>
<dbReference type="SMR" id="Q17XK9"/>
<dbReference type="STRING" id="382638.Hac_0833"/>
<dbReference type="GeneID" id="31758248"/>
<dbReference type="KEGG" id="hac:Hac_0833"/>
<dbReference type="eggNOG" id="COG0173">
    <property type="taxonomic scope" value="Bacteria"/>
</dbReference>
<dbReference type="HOGENOM" id="CLU_014330_3_2_7"/>
<dbReference type="OrthoDB" id="9802326at2"/>
<dbReference type="BioCyc" id="HACI382638:HAC_RS03585-MONOMER"/>
<dbReference type="Proteomes" id="UP000000775">
    <property type="component" value="Chromosome"/>
</dbReference>
<dbReference type="GO" id="GO:0005737">
    <property type="term" value="C:cytoplasm"/>
    <property type="evidence" value="ECO:0007669"/>
    <property type="project" value="UniProtKB-SubCell"/>
</dbReference>
<dbReference type="GO" id="GO:0004815">
    <property type="term" value="F:aspartate-tRNA ligase activity"/>
    <property type="evidence" value="ECO:0007669"/>
    <property type="project" value="UniProtKB-UniRule"/>
</dbReference>
<dbReference type="GO" id="GO:0050560">
    <property type="term" value="F:aspartate-tRNA(Asn) ligase activity"/>
    <property type="evidence" value="ECO:0007669"/>
    <property type="project" value="UniProtKB-EC"/>
</dbReference>
<dbReference type="GO" id="GO:0005524">
    <property type="term" value="F:ATP binding"/>
    <property type="evidence" value="ECO:0007669"/>
    <property type="project" value="UniProtKB-UniRule"/>
</dbReference>
<dbReference type="GO" id="GO:0003676">
    <property type="term" value="F:nucleic acid binding"/>
    <property type="evidence" value="ECO:0007669"/>
    <property type="project" value="InterPro"/>
</dbReference>
<dbReference type="GO" id="GO:0006422">
    <property type="term" value="P:aspartyl-tRNA aminoacylation"/>
    <property type="evidence" value="ECO:0007669"/>
    <property type="project" value="UniProtKB-UniRule"/>
</dbReference>
<dbReference type="CDD" id="cd00777">
    <property type="entry name" value="AspRS_core"/>
    <property type="match status" value="1"/>
</dbReference>
<dbReference type="CDD" id="cd04317">
    <property type="entry name" value="EcAspRS_like_N"/>
    <property type="match status" value="1"/>
</dbReference>
<dbReference type="Gene3D" id="3.30.930.10">
    <property type="entry name" value="Bira Bifunctional Protein, Domain 2"/>
    <property type="match status" value="1"/>
</dbReference>
<dbReference type="Gene3D" id="3.30.1360.30">
    <property type="entry name" value="GAD-like domain"/>
    <property type="match status" value="1"/>
</dbReference>
<dbReference type="Gene3D" id="2.40.50.140">
    <property type="entry name" value="Nucleic acid-binding proteins"/>
    <property type="match status" value="1"/>
</dbReference>
<dbReference type="HAMAP" id="MF_00044">
    <property type="entry name" value="Asp_tRNA_synth_type1"/>
    <property type="match status" value="1"/>
</dbReference>
<dbReference type="InterPro" id="IPR004364">
    <property type="entry name" value="Aa-tRNA-synt_II"/>
</dbReference>
<dbReference type="InterPro" id="IPR006195">
    <property type="entry name" value="aa-tRNA-synth_II"/>
</dbReference>
<dbReference type="InterPro" id="IPR045864">
    <property type="entry name" value="aa-tRNA-synth_II/BPL/LPL"/>
</dbReference>
<dbReference type="InterPro" id="IPR004524">
    <property type="entry name" value="Asp-tRNA-ligase_1"/>
</dbReference>
<dbReference type="InterPro" id="IPR047089">
    <property type="entry name" value="Asp-tRNA-ligase_1_N"/>
</dbReference>
<dbReference type="InterPro" id="IPR002312">
    <property type="entry name" value="Asp/Asn-tRNA-synth_IIb"/>
</dbReference>
<dbReference type="InterPro" id="IPR047090">
    <property type="entry name" value="AspRS_core"/>
</dbReference>
<dbReference type="InterPro" id="IPR004115">
    <property type="entry name" value="GAD-like_sf"/>
</dbReference>
<dbReference type="InterPro" id="IPR029351">
    <property type="entry name" value="GAD_dom"/>
</dbReference>
<dbReference type="InterPro" id="IPR012340">
    <property type="entry name" value="NA-bd_OB-fold"/>
</dbReference>
<dbReference type="InterPro" id="IPR004365">
    <property type="entry name" value="NA-bd_OB_tRNA"/>
</dbReference>
<dbReference type="NCBIfam" id="TIGR00459">
    <property type="entry name" value="aspS_bact"/>
    <property type="match status" value="1"/>
</dbReference>
<dbReference type="NCBIfam" id="NF001750">
    <property type="entry name" value="PRK00476.1"/>
    <property type="match status" value="1"/>
</dbReference>
<dbReference type="PANTHER" id="PTHR22594:SF5">
    <property type="entry name" value="ASPARTATE--TRNA LIGASE, MITOCHONDRIAL"/>
    <property type="match status" value="1"/>
</dbReference>
<dbReference type="PANTHER" id="PTHR22594">
    <property type="entry name" value="ASPARTYL/LYSYL-TRNA SYNTHETASE"/>
    <property type="match status" value="1"/>
</dbReference>
<dbReference type="Pfam" id="PF02938">
    <property type="entry name" value="GAD"/>
    <property type="match status" value="1"/>
</dbReference>
<dbReference type="Pfam" id="PF00152">
    <property type="entry name" value="tRNA-synt_2"/>
    <property type="match status" value="1"/>
</dbReference>
<dbReference type="Pfam" id="PF01336">
    <property type="entry name" value="tRNA_anti-codon"/>
    <property type="match status" value="1"/>
</dbReference>
<dbReference type="PRINTS" id="PR01042">
    <property type="entry name" value="TRNASYNTHASP"/>
</dbReference>
<dbReference type="SUPFAM" id="SSF55681">
    <property type="entry name" value="Class II aaRS and biotin synthetases"/>
    <property type="match status" value="1"/>
</dbReference>
<dbReference type="SUPFAM" id="SSF55261">
    <property type="entry name" value="GAD domain-like"/>
    <property type="match status" value="1"/>
</dbReference>
<dbReference type="SUPFAM" id="SSF50249">
    <property type="entry name" value="Nucleic acid-binding proteins"/>
    <property type="match status" value="1"/>
</dbReference>
<dbReference type="PROSITE" id="PS50862">
    <property type="entry name" value="AA_TRNA_LIGASE_II"/>
    <property type="match status" value="1"/>
</dbReference>
<sequence>MRSHFCTEVSEKDIDKIVKVAGWCNTYRDHGGVVFIDLRDKSGLVQLVCDPSSKAYEKALEVRSEFVLVAKGKARLRGPGLENPKLKTGKIEIVLEELVIENKSATPPIEIGNKNVNEDLRLKYRYLDLRSLNAYEIFKLRSEVALIARNTLAQKGFLEIETPILSKTTPEGARDYLVPSRVHEGEFFALPQSPQLFKQLLMVGGMDRYFQIARCFRDEDLRADRQPEFTQIDAEMSFCDENDVMGVVEDLLREIFKAIGHTIPTPFKRMPYKEAMENYGSDKPDLRFELPLVEVGDCFMDSSNSIFSNIAKDSKNKRIKALNVKGADATFSRSVLKELEEFVHQFGAQGLAYLQIKEYEIKGPLVKFLSEKGLKNILERTNAQVGDIVFFGAGDKKIVLDYMGRLRLKVAEMLDLIDKNAWNFLWVVNFPMFEKTENGYHAAHHPFTMPKNIECEDIEEIEAYAYDVVLNGVELGGGSIRIHKEEMQKKVFERINIHEDEAQKKFGFLLEALKFGAPPHGGFAIGFDRLIMLMTQSNSIRDVIAFPKTQKASCLLTNAPSPISEEQLRELHIRLRKLSLKDMI</sequence>
<proteinExistence type="inferred from homology"/>
<gene>
    <name evidence="1" type="primary">aspS</name>
    <name type="ordered locus">Hac_0833</name>
</gene>
<name>SYDND_HELAH</name>
<protein>
    <recommendedName>
        <fullName evidence="1">Aspartate--tRNA(Asp/Asn) ligase</fullName>
        <ecNumber evidence="1">6.1.1.23</ecNumber>
    </recommendedName>
    <alternativeName>
        <fullName evidence="1">Aspartyl-tRNA synthetase</fullName>
        <shortName evidence="1">AspRS</shortName>
    </alternativeName>
    <alternativeName>
        <fullName evidence="1">Non-discriminating aspartyl-tRNA synthetase</fullName>
        <shortName evidence="1">ND-AspRS</shortName>
    </alternativeName>
</protein>
<accession>Q17XK9</accession>
<keyword id="KW-0030">Aminoacyl-tRNA synthetase</keyword>
<keyword id="KW-0067">ATP-binding</keyword>
<keyword id="KW-0963">Cytoplasm</keyword>
<keyword id="KW-0436">Ligase</keyword>
<keyword id="KW-0547">Nucleotide-binding</keyword>
<keyword id="KW-0648">Protein biosynthesis</keyword>
<comment type="function">
    <text evidence="1">Aspartyl-tRNA synthetase with relaxed tRNA specificity since it is able to aspartylate not only its cognate tRNA(Asp) but also tRNA(Asn). Reaction proceeds in two steps: L-aspartate is first activated by ATP to form Asp-AMP and then transferred to the acceptor end of tRNA(Asp/Asn).</text>
</comment>
<comment type="catalytic activity">
    <reaction evidence="1">
        <text>tRNA(Asx) + L-aspartate + ATP = L-aspartyl-tRNA(Asx) + AMP + diphosphate</text>
        <dbReference type="Rhea" id="RHEA:18349"/>
        <dbReference type="Rhea" id="RHEA-COMP:9710"/>
        <dbReference type="Rhea" id="RHEA-COMP:9711"/>
        <dbReference type="ChEBI" id="CHEBI:29991"/>
        <dbReference type="ChEBI" id="CHEBI:30616"/>
        <dbReference type="ChEBI" id="CHEBI:33019"/>
        <dbReference type="ChEBI" id="CHEBI:78442"/>
        <dbReference type="ChEBI" id="CHEBI:78516"/>
        <dbReference type="ChEBI" id="CHEBI:456215"/>
        <dbReference type="EC" id="6.1.1.23"/>
    </reaction>
</comment>
<comment type="subunit">
    <text evidence="1">Homodimer.</text>
</comment>
<comment type="subcellular location">
    <subcellularLocation>
        <location evidence="1">Cytoplasm</location>
    </subcellularLocation>
</comment>
<comment type="similarity">
    <text evidence="1">Belongs to the class-II aminoacyl-tRNA synthetase family. Type 1 subfamily.</text>
</comment>
<feature type="chain" id="PRO_1000006684" description="Aspartate--tRNA(Asp/Asn) ligase">
    <location>
        <begin position="1"/>
        <end position="584"/>
    </location>
</feature>
<feature type="region of interest" description="Aspartate" evidence="1">
    <location>
        <begin position="195"/>
        <end position="198"/>
    </location>
</feature>
<feature type="binding site" evidence="1">
    <location>
        <position position="171"/>
    </location>
    <ligand>
        <name>L-aspartate</name>
        <dbReference type="ChEBI" id="CHEBI:29991"/>
    </ligand>
</feature>
<feature type="binding site" evidence="1">
    <location>
        <begin position="217"/>
        <end position="219"/>
    </location>
    <ligand>
        <name>ATP</name>
        <dbReference type="ChEBI" id="CHEBI:30616"/>
    </ligand>
</feature>
<feature type="binding site" evidence="1">
    <location>
        <position position="217"/>
    </location>
    <ligand>
        <name>L-aspartate</name>
        <dbReference type="ChEBI" id="CHEBI:29991"/>
    </ligand>
</feature>
<feature type="binding site" evidence="1">
    <location>
        <position position="226"/>
    </location>
    <ligand>
        <name>ATP</name>
        <dbReference type="ChEBI" id="CHEBI:30616"/>
    </ligand>
</feature>
<feature type="binding site" evidence="1">
    <location>
        <position position="444"/>
    </location>
    <ligand>
        <name>L-aspartate</name>
        <dbReference type="ChEBI" id="CHEBI:29991"/>
    </ligand>
</feature>
<feature type="binding site" evidence="1">
    <location>
        <position position="474"/>
    </location>
    <ligand>
        <name>ATP</name>
        <dbReference type="ChEBI" id="CHEBI:30616"/>
    </ligand>
</feature>
<feature type="binding site" evidence="1">
    <location>
        <position position="481"/>
    </location>
    <ligand>
        <name>L-aspartate</name>
        <dbReference type="ChEBI" id="CHEBI:29991"/>
    </ligand>
</feature>
<feature type="binding site" evidence="1">
    <location>
        <begin position="526"/>
        <end position="529"/>
    </location>
    <ligand>
        <name>ATP</name>
        <dbReference type="ChEBI" id="CHEBI:30616"/>
    </ligand>
</feature>
<feature type="site" description="Important for tRNA non-discrimination" evidence="1">
    <location>
        <position position="30"/>
    </location>
</feature>
<feature type="site" description="Important for tRNA non-discrimination" evidence="1">
    <location>
        <position position="80"/>
    </location>
</feature>
<reference key="1">
    <citation type="journal article" date="2006" name="PLoS Genet.">
        <title>Who ate whom? Adaptive Helicobacter genomic changes that accompanied a host jump from early humans to large felines.</title>
        <authorList>
            <person name="Eppinger M."/>
            <person name="Baar C."/>
            <person name="Linz B."/>
            <person name="Raddatz G."/>
            <person name="Lanz C."/>
            <person name="Keller H."/>
            <person name="Morelli G."/>
            <person name="Gressmann H."/>
            <person name="Achtman M."/>
            <person name="Schuster S.C."/>
        </authorList>
    </citation>
    <scope>NUCLEOTIDE SEQUENCE [LARGE SCALE GENOMIC DNA]</scope>
    <source>
        <strain>Sheeba</strain>
    </source>
</reference>
<organism>
    <name type="scientific">Helicobacter acinonychis (strain Sheeba)</name>
    <dbReference type="NCBI Taxonomy" id="382638"/>
    <lineage>
        <taxon>Bacteria</taxon>
        <taxon>Pseudomonadati</taxon>
        <taxon>Campylobacterota</taxon>
        <taxon>Epsilonproteobacteria</taxon>
        <taxon>Campylobacterales</taxon>
        <taxon>Helicobacteraceae</taxon>
        <taxon>Helicobacter</taxon>
    </lineage>
</organism>
<evidence type="ECO:0000255" key="1">
    <source>
        <dbReference type="HAMAP-Rule" id="MF_00044"/>
    </source>
</evidence>